<evidence type="ECO:0000256" key="1">
    <source>
        <dbReference type="SAM" id="MobiDB-lite"/>
    </source>
</evidence>
<evidence type="ECO:0000269" key="2">
    <source>
    </source>
</evidence>
<evidence type="ECO:0000269" key="3">
    <source>
    </source>
</evidence>
<proteinExistence type="evidence at transcript level"/>
<organism>
    <name type="scientific">Mus musculus</name>
    <name type="common">Mouse</name>
    <dbReference type="NCBI Taxonomy" id="10090"/>
    <lineage>
        <taxon>Eukaryota</taxon>
        <taxon>Metazoa</taxon>
        <taxon>Chordata</taxon>
        <taxon>Craniata</taxon>
        <taxon>Vertebrata</taxon>
        <taxon>Euteleostomi</taxon>
        <taxon>Mammalia</taxon>
        <taxon>Eutheria</taxon>
        <taxon>Euarchontoglires</taxon>
        <taxon>Glires</taxon>
        <taxon>Rodentia</taxon>
        <taxon>Myomorpha</taxon>
        <taxon>Muroidea</taxon>
        <taxon>Muridae</taxon>
        <taxon>Murinae</taxon>
        <taxon>Mus</taxon>
        <taxon>Mus</taxon>
    </lineage>
</organism>
<feature type="chain" id="PRO_0000282403" description="Arginine vasopressin-induced protein 1">
    <location>
        <begin position="1"/>
        <end position="142"/>
    </location>
</feature>
<feature type="region of interest" description="Disordered" evidence="1">
    <location>
        <begin position="1"/>
        <end position="28"/>
    </location>
</feature>
<feature type="region of interest" description="Disordered" evidence="1">
    <location>
        <begin position="74"/>
        <end position="142"/>
    </location>
</feature>
<feature type="compositionally biased region" description="Polar residues" evidence="1">
    <location>
        <begin position="15"/>
        <end position="28"/>
    </location>
</feature>
<feature type="compositionally biased region" description="Basic residues" evidence="1">
    <location>
        <begin position="74"/>
        <end position="88"/>
    </location>
</feature>
<feature type="compositionally biased region" description="Polar residues" evidence="1">
    <location>
        <begin position="96"/>
        <end position="119"/>
    </location>
</feature>
<reference key="1">
    <citation type="journal article" date="2002" name="EMBO J.">
        <title>A novel vasopressin-induced transcript promotes MAP kinase activation and ENaC downregulation.</title>
        <authorList>
            <person name="Nicod M."/>
            <person name="Michlig S."/>
            <person name="Flahaut M."/>
            <person name="Salinas M."/>
            <person name="Fowler-Jaeger N."/>
            <person name="Horisberger J.-D."/>
            <person name="Rossier B.C."/>
            <person name="Firsov D."/>
        </authorList>
    </citation>
    <scope>NUCLEOTIDE SEQUENCE [MRNA]</scope>
    <scope>FUNCTION</scope>
    <scope>INDUCTION</scope>
</reference>
<reference key="2">
    <citation type="journal article" date="2005" name="Science">
        <title>The transcriptional landscape of the mammalian genome.</title>
        <authorList>
            <person name="Carninci P."/>
            <person name="Kasukawa T."/>
            <person name="Katayama S."/>
            <person name="Gough J."/>
            <person name="Frith M.C."/>
            <person name="Maeda N."/>
            <person name="Oyama R."/>
            <person name="Ravasi T."/>
            <person name="Lenhard B."/>
            <person name="Wells C."/>
            <person name="Kodzius R."/>
            <person name="Shimokawa K."/>
            <person name="Bajic V.B."/>
            <person name="Brenner S.E."/>
            <person name="Batalov S."/>
            <person name="Forrest A.R."/>
            <person name="Zavolan M."/>
            <person name="Davis M.J."/>
            <person name="Wilming L.G."/>
            <person name="Aidinis V."/>
            <person name="Allen J.E."/>
            <person name="Ambesi-Impiombato A."/>
            <person name="Apweiler R."/>
            <person name="Aturaliya R.N."/>
            <person name="Bailey T.L."/>
            <person name="Bansal M."/>
            <person name="Baxter L."/>
            <person name="Beisel K.W."/>
            <person name="Bersano T."/>
            <person name="Bono H."/>
            <person name="Chalk A.M."/>
            <person name="Chiu K.P."/>
            <person name="Choudhary V."/>
            <person name="Christoffels A."/>
            <person name="Clutterbuck D.R."/>
            <person name="Crowe M.L."/>
            <person name="Dalla E."/>
            <person name="Dalrymple B.P."/>
            <person name="de Bono B."/>
            <person name="Della Gatta G."/>
            <person name="di Bernardo D."/>
            <person name="Down T."/>
            <person name="Engstrom P."/>
            <person name="Fagiolini M."/>
            <person name="Faulkner G."/>
            <person name="Fletcher C.F."/>
            <person name="Fukushima T."/>
            <person name="Furuno M."/>
            <person name="Futaki S."/>
            <person name="Gariboldi M."/>
            <person name="Georgii-Hemming P."/>
            <person name="Gingeras T.R."/>
            <person name="Gojobori T."/>
            <person name="Green R.E."/>
            <person name="Gustincich S."/>
            <person name="Harbers M."/>
            <person name="Hayashi Y."/>
            <person name="Hensch T.K."/>
            <person name="Hirokawa N."/>
            <person name="Hill D."/>
            <person name="Huminiecki L."/>
            <person name="Iacono M."/>
            <person name="Ikeo K."/>
            <person name="Iwama A."/>
            <person name="Ishikawa T."/>
            <person name="Jakt M."/>
            <person name="Kanapin A."/>
            <person name="Katoh M."/>
            <person name="Kawasawa Y."/>
            <person name="Kelso J."/>
            <person name="Kitamura H."/>
            <person name="Kitano H."/>
            <person name="Kollias G."/>
            <person name="Krishnan S.P."/>
            <person name="Kruger A."/>
            <person name="Kummerfeld S.K."/>
            <person name="Kurochkin I.V."/>
            <person name="Lareau L.F."/>
            <person name="Lazarevic D."/>
            <person name="Lipovich L."/>
            <person name="Liu J."/>
            <person name="Liuni S."/>
            <person name="McWilliam S."/>
            <person name="Madan Babu M."/>
            <person name="Madera M."/>
            <person name="Marchionni L."/>
            <person name="Matsuda H."/>
            <person name="Matsuzawa S."/>
            <person name="Miki H."/>
            <person name="Mignone F."/>
            <person name="Miyake S."/>
            <person name="Morris K."/>
            <person name="Mottagui-Tabar S."/>
            <person name="Mulder N."/>
            <person name="Nakano N."/>
            <person name="Nakauchi H."/>
            <person name="Ng P."/>
            <person name="Nilsson R."/>
            <person name="Nishiguchi S."/>
            <person name="Nishikawa S."/>
            <person name="Nori F."/>
            <person name="Ohara O."/>
            <person name="Okazaki Y."/>
            <person name="Orlando V."/>
            <person name="Pang K.C."/>
            <person name="Pavan W.J."/>
            <person name="Pavesi G."/>
            <person name="Pesole G."/>
            <person name="Petrovsky N."/>
            <person name="Piazza S."/>
            <person name="Reed J."/>
            <person name="Reid J.F."/>
            <person name="Ring B.Z."/>
            <person name="Ringwald M."/>
            <person name="Rost B."/>
            <person name="Ruan Y."/>
            <person name="Salzberg S.L."/>
            <person name="Sandelin A."/>
            <person name="Schneider C."/>
            <person name="Schoenbach C."/>
            <person name="Sekiguchi K."/>
            <person name="Semple C.A."/>
            <person name="Seno S."/>
            <person name="Sessa L."/>
            <person name="Sheng Y."/>
            <person name="Shibata Y."/>
            <person name="Shimada H."/>
            <person name="Shimada K."/>
            <person name="Silva D."/>
            <person name="Sinclair B."/>
            <person name="Sperling S."/>
            <person name="Stupka E."/>
            <person name="Sugiura K."/>
            <person name="Sultana R."/>
            <person name="Takenaka Y."/>
            <person name="Taki K."/>
            <person name="Tammoja K."/>
            <person name="Tan S.L."/>
            <person name="Tang S."/>
            <person name="Taylor M.S."/>
            <person name="Tegner J."/>
            <person name="Teichmann S.A."/>
            <person name="Ueda H.R."/>
            <person name="van Nimwegen E."/>
            <person name="Verardo R."/>
            <person name="Wei C.L."/>
            <person name="Yagi K."/>
            <person name="Yamanishi H."/>
            <person name="Zabarovsky E."/>
            <person name="Zhu S."/>
            <person name="Zimmer A."/>
            <person name="Hide W."/>
            <person name="Bult C."/>
            <person name="Grimmond S.M."/>
            <person name="Teasdale R.D."/>
            <person name="Liu E.T."/>
            <person name="Brusic V."/>
            <person name="Quackenbush J."/>
            <person name="Wahlestedt C."/>
            <person name="Mattick J.S."/>
            <person name="Hume D.A."/>
            <person name="Kai C."/>
            <person name="Sasaki D."/>
            <person name="Tomaru Y."/>
            <person name="Fukuda S."/>
            <person name="Kanamori-Katayama M."/>
            <person name="Suzuki M."/>
            <person name="Aoki J."/>
            <person name="Arakawa T."/>
            <person name="Iida J."/>
            <person name="Imamura K."/>
            <person name="Itoh M."/>
            <person name="Kato T."/>
            <person name="Kawaji H."/>
            <person name="Kawagashira N."/>
            <person name="Kawashima T."/>
            <person name="Kojima M."/>
            <person name="Kondo S."/>
            <person name="Konno H."/>
            <person name="Nakano K."/>
            <person name="Ninomiya N."/>
            <person name="Nishio T."/>
            <person name="Okada M."/>
            <person name="Plessy C."/>
            <person name="Shibata K."/>
            <person name="Shiraki T."/>
            <person name="Suzuki S."/>
            <person name="Tagami M."/>
            <person name="Waki K."/>
            <person name="Watahiki A."/>
            <person name="Okamura-Oho Y."/>
            <person name="Suzuki H."/>
            <person name="Kawai J."/>
            <person name="Hayashizaki Y."/>
        </authorList>
    </citation>
    <scope>NUCLEOTIDE SEQUENCE [LARGE SCALE MRNA]</scope>
    <source>
        <strain>C57BL/6J</strain>
        <tissue>Tongue</tissue>
    </source>
</reference>
<reference key="3">
    <citation type="journal article" date="2004" name="Genome Res.">
        <title>The status, quality, and expansion of the NIH full-length cDNA project: the Mammalian Gene Collection (MGC).</title>
        <authorList>
            <consortium name="The MGC Project Team"/>
        </authorList>
    </citation>
    <scope>NUCLEOTIDE SEQUENCE [LARGE SCALE MRNA]</scope>
    <source>
        <strain>C57BL/6J</strain>
        <tissue>Thymus</tissue>
    </source>
</reference>
<reference key="4">
    <citation type="journal article" date="2004" name="Am. J. Physiol.">
        <title>AVP-induced VIT32 gene expression in collecting duct cells occurs via trans-activation of a CRE in the 5'-flanking region of the VIT32 gene.</title>
        <authorList>
            <person name="Thomas C.P."/>
            <person name="Loftus R.W."/>
            <person name="Liu K.Z."/>
        </authorList>
    </citation>
    <scope>INDUCTION</scope>
</reference>
<dbReference type="EMBL" id="AK009243">
    <property type="protein sequence ID" value="BAB26163.1"/>
    <property type="molecule type" value="mRNA"/>
</dbReference>
<dbReference type="EMBL" id="BC027646">
    <property type="protein sequence ID" value="AAH27646.1"/>
    <property type="molecule type" value="mRNA"/>
</dbReference>
<dbReference type="CCDS" id="CCDS29822.1"/>
<dbReference type="RefSeq" id="NP_081382.1">
    <property type="nucleotide sequence ID" value="NM_027106.4"/>
</dbReference>
<dbReference type="SMR" id="Q9D7H4"/>
<dbReference type="FunCoup" id="Q9D7H4">
    <property type="interactions" value="2"/>
</dbReference>
<dbReference type="STRING" id="10090.ENSMUSP00000018965"/>
<dbReference type="PhosphoSitePlus" id="Q9D7H4"/>
<dbReference type="PaxDb" id="10090-ENSMUSP00000018965"/>
<dbReference type="ProteomicsDB" id="273432"/>
<dbReference type="Pumba" id="Q9D7H4"/>
<dbReference type="Antibodypedia" id="52147">
    <property type="antibodies" value="173 antibodies from 19 providers"/>
</dbReference>
<dbReference type="DNASU" id="69534"/>
<dbReference type="Ensembl" id="ENSMUST00000018965.4">
    <property type="protein sequence ID" value="ENSMUSP00000018965.4"/>
    <property type="gene ID" value="ENSMUSG00000018821.4"/>
</dbReference>
<dbReference type="GeneID" id="69534"/>
<dbReference type="KEGG" id="mmu:69534"/>
<dbReference type="UCSC" id="uc008hnh.1">
    <property type="organism name" value="mouse"/>
</dbReference>
<dbReference type="AGR" id="MGI:1916784"/>
<dbReference type="CTD" id="60370"/>
<dbReference type="MGI" id="MGI:1916784">
    <property type="gene designation" value="Avpi1"/>
</dbReference>
<dbReference type="VEuPathDB" id="HostDB:ENSMUSG00000018821"/>
<dbReference type="eggNOG" id="ENOG502SBE0">
    <property type="taxonomic scope" value="Eukaryota"/>
</dbReference>
<dbReference type="GeneTree" id="ENSGT00510000049872"/>
<dbReference type="HOGENOM" id="CLU_106134_0_0_1"/>
<dbReference type="InParanoid" id="Q9D7H4"/>
<dbReference type="OMA" id="NWKKPGP"/>
<dbReference type="OrthoDB" id="9906905at2759"/>
<dbReference type="PhylomeDB" id="Q9D7H4"/>
<dbReference type="TreeFam" id="TF338287"/>
<dbReference type="BioGRID-ORCS" id="69534">
    <property type="hits" value="2 hits in 76 CRISPR screens"/>
</dbReference>
<dbReference type="PRO" id="PR:Q9D7H4"/>
<dbReference type="Proteomes" id="UP000000589">
    <property type="component" value="Chromosome 19"/>
</dbReference>
<dbReference type="RNAct" id="Q9D7H4">
    <property type="molecule type" value="protein"/>
</dbReference>
<dbReference type="Bgee" id="ENSMUSG00000018821">
    <property type="expression patterns" value="Expressed in lip and 237 other cell types or tissues"/>
</dbReference>
<dbReference type="ExpressionAtlas" id="Q9D7H4">
    <property type="expression patterns" value="baseline and differential"/>
</dbReference>
<dbReference type="GO" id="GO:0043410">
    <property type="term" value="P:positive regulation of MAPK cascade"/>
    <property type="evidence" value="ECO:0000314"/>
    <property type="project" value="MGI"/>
</dbReference>
<dbReference type="InterPro" id="IPR039579">
    <property type="entry name" value="AVPI1"/>
</dbReference>
<dbReference type="InterPro" id="IPR020282">
    <property type="entry name" value="Avpi1/C8orf4_dom"/>
</dbReference>
<dbReference type="PANTHER" id="PTHR14350">
    <property type="entry name" value="ARGININE VASOPRESSIN-INDUCED PROTEIN 1"/>
    <property type="match status" value="1"/>
</dbReference>
<dbReference type="Pfam" id="PF15063">
    <property type="entry name" value="TC1"/>
    <property type="match status" value="1"/>
</dbReference>
<name>AVPI1_MOUSE</name>
<gene>
    <name type="primary">Avpi1</name>
</gene>
<accession>Q9D7H4</accession>
<sequence length="142" mass="15802">MGTPASVVSEPPLWQVSTPQTRGRKQASANIFQDAELVQIQGLFQRSGDQLAEERAQIIWECAGDHRVAEALRRLRRKRPPKQNHCSRLRVPEPGSTASDPQASTTDTASSEQSGNSRRTSARAPRNWNKPGPTGYLHQIRH</sequence>
<comment type="function">
    <text evidence="2">May be involved in MAP kinase activation, epithelial sodium channel (ENaC) down-regulation and cell cycling.</text>
</comment>
<comment type="induction">
    <text evidence="2 3">By vasopressin.</text>
</comment>
<keyword id="KW-0131">Cell cycle</keyword>
<keyword id="KW-1185">Reference proteome</keyword>
<protein>
    <recommendedName>
        <fullName>Arginine vasopressin-induced protein 1</fullName>
        <shortName>AVP-induced protein 1</shortName>
    </recommendedName>
    <alternativeName>
        <fullName>Arginine vasopressin-induced transcript 32 protein</fullName>
        <shortName>VIP32</shortName>
        <shortName>VIT32</shortName>
    </alternativeName>
</protein>